<proteinExistence type="inferred from homology"/>
<sequence>MGPYLSQPKTEKTSVTGQNQVLQYAATHMQGWRNTMEDAHISDLNIEPDVHLFAVFDGHGGSEVAIFAERHFREELMKNKNYQQKNYEKALTETFFKIDKMLQEPSGLDELNKIRGVTDEASLAGCTANVALIVGKTLYVANAGDSRSFLNRDGKPFDMSKDHKPDDEQEKKRIERAGGFVSDGRVNGNLSLSRALGDLEYKKDNRFKPEEQIITALPDVKVTQLSAADKFLLMGCDGVFETWDHQQILNFINSELKNTQNLQKAAEKLLDQLLAKDTSLGTGCDNMTCILIQFK</sequence>
<dbReference type="EC" id="3.1.3.16"/>
<dbReference type="EMBL" id="CT868552">
    <property type="protein sequence ID" value="CAK85930.1"/>
    <property type="molecule type" value="Genomic_DNA"/>
</dbReference>
<dbReference type="RefSeq" id="XP_001453327.1">
    <property type="nucleotide sequence ID" value="XM_001453290.2"/>
</dbReference>
<dbReference type="SMR" id="A0DSB3"/>
<dbReference type="FunCoup" id="A0DSB3">
    <property type="interactions" value="1470"/>
</dbReference>
<dbReference type="STRING" id="5888.A0DSB3"/>
<dbReference type="EnsemblProtists" id="CAK85930">
    <property type="protein sequence ID" value="CAK85930"/>
    <property type="gene ID" value="GSPATT00019634001"/>
</dbReference>
<dbReference type="GeneID" id="5039112"/>
<dbReference type="KEGG" id="ptm:GSPATT00019634001"/>
<dbReference type="eggNOG" id="KOG0698">
    <property type="taxonomic scope" value="Eukaryota"/>
</dbReference>
<dbReference type="HOGENOM" id="CLU_013173_4_1_1"/>
<dbReference type="InParanoid" id="A0DSB3"/>
<dbReference type="OMA" id="CLLHDRP"/>
<dbReference type="OrthoDB" id="10264738at2759"/>
<dbReference type="Proteomes" id="UP000000600">
    <property type="component" value="Partially assembled WGS sequence"/>
</dbReference>
<dbReference type="GO" id="GO:0016020">
    <property type="term" value="C:membrane"/>
    <property type="evidence" value="ECO:0007669"/>
    <property type="project" value="UniProtKB-SubCell"/>
</dbReference>
<dbReference type="GO" id="GO:0046872">
    <property type="term" value="F:metal ion binding"/>
    <property type="evidence" value="ECO:0007669"/>
    <property type="project" value="UniProtKB-KW"/>
</dbReference>
<dbReference type="GO" id="GO:0004722">
    <property type="term" value="F:protein serine/threonine phosphatase activity"/>
    <property type="evidence" value="ECO:0007669"/>
    <property type="project" value="UniProtKB-EC"/>
</dbReference>
<dbReference type="GO" id="GO:0007165">
    <property type="term" value="P:signal transduction"/>
    <property type="evidence" value="ECO:0000318"/>
    <property type="project" value="GO_Central"/>
</dbReference>
<dbReference type="CDD" id="cd00143">
    <property type="entry name" value="PP2Cc"/>
    <property type="match status" value="1"/>
</dbReference>
<dbReference type="FunFam" id="3.60.40.10:FF:000064">
    <property type="entry name" value="Protein phosphatase 2C 1"/>
    <property type="match status" value="1"/>
</dbReference>
<dbReference type="Gene3D" id="3.60.40.10">
    <property type="entry name" value="PPM-type phosphatase domain"/>
    <property type="match status" value="1"/>
</dbReference>
<dbReference type="InterPro" id="IPR015655">
    <property type="entry name" value="PP2C"/>
</dbReference>
<dbReference type="InterPro" id="IPR000222">
    <property type="entry name" value="PP2C_BS"/>
</dbReference>
<dbReference type="InterPro" id="IPR036457">
    <property type="entry name" value="PPM-type-like_dom_sf"/>
</dbReference>
<dbReference type="InterPro" id="IPR001932">
    <property type="entry name" value="PPM-type_phosphatase-like_dom"/>
</dbReference>
<dbReference type="PANTHER" id="PTHR13832:SF803">
    <property type="entry name" value="PROTEIN PHOSPHATASE 1G"/>
    <property type="match status" value="1"/>
</dbReference>
<dbReference type="PANTHER" id="PTHR13832">
    <property type="entry name" value="PROTEIN PHOSPHATASE 2C"/>
    <property type="match status" value="1"/>
</dbReference>
<dbReference type="Pfam" id="PF00481">
    <property type="entry name" value="PP2C"/>
    <property type="match status" value="1"/>
</dbReference>
<dbReference type="SMART" id="SM00332">
    <property type="entry name" value="PP2Cc"/>
    <property type="match status" value="1"/>
</dbReference>
<dbReference type="SUPFAM" id="SSF81606">
    <property type="entry name" value="PP2C-like"/>
    <property type="match status" value="1"/>
</dbReference>
<dbReference type="PROSITE" id="PS01032">
    <property type="entry name" value="PPM_1"/>
    <property type="match status" value="1"/>
</dbReference>
<dbReference type="PROSITE" id="PS51746">
    <property type="entry name" value="PPM_2"/>
    <property type="match status" value="1"/>
</dbReference>
<name>PP2C6_PARTE</name>
<gene>
    <name type="ORF">GSPATT00019634001</name>
</gene>
<feature type="chain" id="PRO_0000307833" description="Probable protein phosphatase 2C 6">
    <location>
        <begin position="1"/>
        <end position="295"/>
    </location>
</feature>
<feature type="domain" description="PPM-type phosphatase" evidence="2">
    <location>
        <begin position="23"/>
        <end position="294"/>
    </location>
</feature>
<feature type="binding site" evidence="1">
    <location>
        <position position="57"/>
    </location>
    <ligand>
        <name>Mn(2+)</name>
        <dbReference type="ChEBI" id="CHEBI:29035"/>
        <label>1</label>
    </ligand>
</feature>
<feature type="binding site" evidence="1">
    <location>
        <position position="57"/>
    </location>
    <ligand>
        <name>Mn(2+)</name>
        <dbReference type="ChEBI" id="CHEBI:29035"/>
        <label>2</label>
    </ligand>
</feature>
<feature type="binding site" evidence="1">
    <location>
        <position position="58"/>
    </location>
    <ligand>
        <name>Mn(2+)</name>
        <dbReference type="ChEBI" id="CHEBI:29035"/>
        <label>1</label>
    </ligand>
</feature>
<feature type="binding site" evidence="1">
    <location>
        <position position="237"/>
    </location>
    <ligand>
        <name>Mn(2+)</name>
        <dbReference type="ChEBI" id="CHEBI:29035"/>
        <label>2</label>
    </ligand>
</feature>
<feature type="binding site" evidence="1">
    <location>
        <position position="285"/>
    </location>
    <ligand>
        <name>Mn(2+)</name>
        <dbReference type="ChEBI" id="CHEBI:29035"/>
        <label>2</label>
    </ligand>
</feature>
<reference key="1">
    <citation type="journal article" date="2006" name="Nature">
        <title>Global trends of whole-genome duplications revealed by the ciliate Paramecium tetraurelia.</title>
        <authorList>
            <person name="Aury J.-M."/>
            <person name="Jaillon O."/>
            <person name="Duret L."/>
            <person name="Noel B."/>
            <person name="Jubin C."/>
            <person name="Porcel B.M."/>
            <person name="Segurens B."/>
            <person name="Daubin V."/>
            <person name="Anthouard V."/>
            <person name="Aiach N."/>
            <person name="Arnaiz O."/>
            <person name="Billaut A."/>
            <person name="Beisson J."/>
            <person name="Blanc I."/>
            <person name="Bouhouche K."/>
            <person name="Camara F."/>
            <person name="Duharcourt S."/>
            <person name="Guigo R."/>
            <person name="Gogendeau D."/>
            <person name="Katinka M."/>
            <person name="Keller A.-M."/>
            <person name="Kissmehl R."/>
            <person name="Klotz C."/>
            <person name="Koll F."/>
            <person name="Le Mouel A."/>
            <person name="Lepere G."/>
            <person name="Malinsky S."/>
            <person name="Nowacki M."/>
            <person name="Nowak J.K."/>
            <person name="Plattner H."/>
            <person name="Poulain J."/>
            <person name="Ruiz F."/>
            <person name="Serrano V."/>
            <person name="Zagulski M."/>
            <person name="Dessen P."/>
            <person name="Betermier M."/>
            <person name="Weissenbach J."/>
            <person name="Scarpelli C."/>
            <person name="Schaechter V."/>
            <person name="Sperling L."/>
            <person name="Meyer E."/>
            <person name="Cohen J."/>
            <person name="Wincker P."/>
        </authorList>
    </citation>
    <scope>NUCLEOTIDE SEQUENCE [LARGE SCALE GENOMIC DNA]</scope>
    <source>
        <strain>Stock d4-2</strain>
    </source>
</reference>
<evidence type="ECO:0000250" key="1"/>
<evidence type="ECO:0000255" key="2">
    <source>
        <dbReference type="PROSITE-ProRule" id="PRU01082"/>
    </source>
</evidence>
<evidence type="ECO:0000305" key="3"/>
<organism>
    <name type="scientific">Paramecium tetraurelia</name>
    <dbReference type="NCBI Taxonomy" id="5888"/>
    <lineage>
        <taxon>Eukaryota</taxon>
        <taxon>Sar</taxon>
        <taxon>Alveolata</taxon>
        <taxon>Ciliophora</taxon>
        <taxon>Intramacronucleata</taxon>
        <taxon>Oligohymenophorea</taxon>
        <taxon>Peniculida</taxon>
        <taxon>Parameciidae</taxon>
        <taxon>Paramecium</taxon>
    </lineage>
</organism>
<comment type="function">
    <text evidence="1">Enzyme with a broad specificity.</text>
</comment>
<comment type="catalytic activity">
    <reaction>
        <text>O-phospho-L-seryl-[protein] + H2O = L-seryl-[protein] + phosphate</text>
        <dbReference type="Rhea" id="RHEA:20629"/>
        <dbReference type="Rhea" id="RHEA-COMP:9863"/>
        <dbReference type="Rhea" id="RHEA-COMP:11604"/>
        <dbReference type="ChEBI" id="CHEBI:15377"/>
        <dbReference type="ChEBI" id="CHEBI:29999"/>
        <dbReference type="ChEBI" id="CHEBI:43474"/>
        <dbReference type="ChEBI" id="CHEBI:83421"/>
        <dbReference type="EC" id="3.1.3.16"/>
    </reaction>
</comment>
<comment type="catalytic activity">
    <reaction>
        <text>O-phospho-L-threonyl-[protein] + H2O = L-threonyl-[protein] + phosphate</text>
        <dbReference type="Rhea" id="RHEA:47004"/>
        <dbReference type="Rhea" id="RHEA-COMP:11060"/>
        <dbReference type="Rhea" id="RHEA-COMP:11605"/>
        <dbReference type="ChEBI" id="CHEBI:15377"/>
        <dbReference type="ChEBI" id="CHEBI:30013"/>
        <dbReference type="ChEBI" id="CHEBI:43474"/>
        <dbReference type="ChEBI" id="CHEBI:61977"/>
        <dbReference type="EC" id="3.1.3.16"/>
    </reaction>
</comment>
<comment type="cofactor">
    <cofactor evidence="1">
        <name>Mg(2+)</name>
        <dbReference type="ChEBI" id="CHEBI:18420"/>
    </cofactor>
    <cofactor evidence="1">
        <name>Mn(2+)</name>
        <dbReference type="ChEBI" id="CHEBI:29035"/>
    </cofactor>
    <text evidence="1">Binds 2 magnesium or manganese ions per subunit.</text>
</comment>
<comment type="subcellular location">
    <subcellularLocation>
        <location evidence="1">Membrane</location>
        <topology evidence="1">Peripheral membrane protein</topology>
    </subcellularLocation>
</comment>
<comment type="similarity">
    <text evidence="3">Belongs to the PP2C family.</text>
</comment>
<accession>A0DSB3</accession>
<protein>
    <recommendedName>
        <fullName>Probable protein phosphatase 2C 6</fullName>
        <shortName>PP2C 6</shortName>
        <ecNumber>3.1.3.16</ecNumber>
    </recommendedName>
</protein>
<keyword id="KW-0378">Hydrolase</keyword>
<keyword id="KW-0460">Magnesium</keyword>
<keyword id="KW-0464">Manganese</keyword>
<keyword id="KW-0472">Membrane</keyword>
<keyword id="KW-0479">Metal-binding</keyword>
<keyword id="KW-0904">Protein phosphatase</keyword>
<keyword id="KW-1185">Reference proteome</keyword>